<proteinExistence type="inferred from homology"/>
<gene>
    <name type="ORF">GJ23073</name>
</gene>
<evidence type="ECO:0000250" key="1"/>
<evidence type="ECO:0000255" key="2">
    <source>
        <dbReference type="PROSITE-ProRule" id="PRU00091"/>
    </source>
</evidence>
<evidence type="ECO:0000256" key="3">
    <source>
        <dbReference type="SAM" id="MobiDB-lite"/>
    </source>
</evidence>
<evidence type="ECO:0000305" key="4"/>
<keyword id="KW-0479">Metal-binding</keyword>
<keyword id="KW-0597">Phosphoprotein</keyword>
<keyword id="KW-1185">Reference proteome</keyword>
<keyword id="KW-0862">Zinc</keyword>
<keyword id="KW-0863">Zinc-finger</keyword>
<dbReference type="EMBL" id="CH940650">
    <property type="protein sequence ID" value="EDW67451.1"/>
    <property type="molecule type" value="Genomic_DNA"/>
</dbReference>
<dbReference type="SMR" id="B4M140"/>
<dbReference type="FunCoup" id="B4M140">
    <property type="interactions" value="180"/>
</dbReference>
<dbReference type="EnsemblMetazoa" id="FBtr0238998">
    <property type="protein sequence ID" value="FBpp0237490"/>
    <property type="gene ID" value="FBgn0210175"/>
</dbReference>
<dbReference type="EnsemblMetazoa" id="XM_002053895.3">
    <property type="protein sequence ID" value="XP_002053931.1"/>
    <property type="gene ID" value="LOC6630849"/>
</dbReference>
<dbReference type="GeneID" id="6630849"/>
<dbReference type="KEGG" id="dvi:6630849"/>
<dbReference type="eggNOG" id="KOG1819">
    <property type="taxonomic scope" value="Eukaryota"/>
</dbReference>
<dbReference type="HOGENOM" id="CLU_007360_1_0_1"/>
<dbReference type="InParanoid" id="B4M140"/>
<dbReference type="OMA" id="CYVREVQ"/>
<dbReference type="OrthoDB" id="20035at2759"/>
<dbReference type="PhylomeDB" id="B4M140"/>
<dbReference type="Proteomes" id="UP000008792">
    <property type="component" value="Unassembled WGS sequence"/>
</dbReference>
<dbReference type="GO" id="GO:0031901">
    <property type="term" value="C:early endosome membrane"/>
    <property type="evidence" value="ECO:0007669"/>
    <property type="project" value="TreeGrafter"/>
</dbReference>
<dbReference type="GO" id="GO:0008270">
    <property type="term" value="F:zinc ion binding"/>
    <property type="evidence" value="ECO:0007669"/>
    <property type="project" value="UniProtKB-KW"/>
</dbReference>
<dbReference type="CDD" id="cd15731">
    <property type="entry name" value="FYVE_LST2"/>
    <property type="match status" value="1"/>
</dbReference>
<dbReference type="FunFam" id="3.30.40.10:FF:000073">
    <property type="entry name" value="myotubularin-related protein 4 isoform X2"/>
    <property type="match status" value="1"/>
</dbReference>
<dbReference type="Gene3D" id="3.30.40.10">
    <property type="entry name" value="Zinc/RING finger domain, C3HC4 (zinc finger)"/>
    <property type="match status" value="1"/>
</dbReference>
<dbReference type="InterPro" id="IPR043269">
    <property type="entry name" value="FYVE_LST2"/>
</dbReference>
<dbReference type="InterPro" id="IPR051118">
    <property type="entry name" value="LST-2"/>
</dbReference>
<dbReference type="InterPro" id="IPR000306">
    <property type="entry name" value="Znf_FYVE"/>
</dbReference>
<dbReference type="InterPro" id="IPR017455">
    <property type="entry name" value="Znf_FYVE-rel"/>
</dbReference>
<dbReference type="InterPro" id="IPR011011">
    <property type="entry name" value="Znf_FYVE_PHD"/>
</dbReference>
<dbReference type="InterPro" id="IPR013083">
    <property type="entry name" value="Znf_RING/FYVE/PHD"/>
</dbReference>
<dbReference type="PANTHER" id="PTHR46465">
    <property type="entry name" value="LATERAL SIGNALING TARGET PROTEIN 2 HOMOLOG"/>
    <property type="match status" value="1"/>
</dbReference>
<dbReference type="PANTHER" id="PTHR46465:SF2">
    <property type="entry name" value="LATERAL SIGNALING TARGET PROTEIN 2 HOMOLOG"/>
    <property type="match status" value="1"/>
</dbReference>
<dbReference type="Pfam" id="PF01363">
    <property type="entry name" value="FYVE"/>
    <property type="match status" value="1"/>
</dbReference>
<dbReference type="SMART" id="SM00064">
    <property type="entry name" value="FYVE"/>
    <property type="match status" value="1"/>
</dbReference>
<dbReference type="SUPFAM" id="SSF57903">
    <property type="entry name" value="FYVE/PHD zinc finger"/>
    <property type="match status" value="1"/>
</dbReference>
<dbReference type="PROSITE" id="PS50178">
    <property type="entry name" value="ZF_FYVE"/>
    <property type="match status" value="1"/>
</dbReference>
<sequence length="1052" mass="115891">MDTFRKWLNKPKADDKSLLARFYHADRSLTAVASELDSFDGRAEPDRCTRLVSRLRQNQDKVLAITNLIMEELLGEERDPRAFRAKFPEEVLQENLAGQLWFGAECLAAGSSILNRESESKEMRPLAQAVTKSLSNVRVLLRDQCLRNNVPNSKTLHLDFNDSTTEQLYESLKIFDHLFAEFELSYVSAMVQVKSRHEYEMQQWIGVLFSETLQRALKIGLLDQDMVDAFDPGLMFSIPRLAIVAGLVIYAKGPLNMDMPGDELSEMFRPFRTILIKIRDLLRNLSKQELYQLEKLLCTNEEINTKVPLGYSSIEAPSPEPNSSNNHNNNNSNSSDSGSAKTSTTSPHKAVERLVDHRNNNNSSSCSASAATQAVARSPSMLSLSAGSTPTASPAPSPTPSHSIASTSSAATTSTNPPANWSEDDDDDDEEREDDEEECGMLDSDEQDLNDDSDSDVDEYIEAQLKAIVAAADCASGYLIPNTNLGNLLQPQTAPLTDNFVASEDDEFGAEQEQEQQQRQREEQLQPSSEQQEEPSTSAAMLAARRTLQRLRLPSSSSENEQTTGSNQQSTIKTPNGGGQPMRSGSQRQRHHSHHHHHRHHHHHHHHRQHHHQQQHQPAQAEQHSHHHHHQTHPHRTSRSARKRCSQEHWESTTAEQQQTIDHGHGLASADTSNASSFSDDVSLAMRNTTARLKFKSTENLLHRLFVCIAGVADQLQTNFASDLRQILRSVFLINMSSSQEDIDIPEKTKESELFEFRASENDVIQESAGSNQSIYSAEEVNPELDNVFNMGNGNGGGTNAARHSAGAAMQRNNTIDLSGGGYNNNNNNNNNSGSSSSSNSSTVARSHVARSRSLGDQEAATSGTLQEEQRQQQQQQQAQLQLQMQRQRNNSVGSNSPSSSSSSSSSSEHNSPISTRSGSRRRLHSNSASMPSIGSTATTAAATAAATATTTTSATTTTTTTTMSPPAWIPDGKAPRCMSCQTPFTAFRRRHHCRNCGGVFCGVCSNASAPLPKYGLTKAVRVCRECYVREVRSSRTQAHSQASRPQAASAS</sequence>
<reference key="1">
    <citation type="journal article" date="2007" name="Nature">
        <title>Evolution of genes and genomes on the Drosophila phylogeny.</title>
        <authorList>
            <consortium name="Drosophila 12 genomes consortium"/>
        </authorList>
    </citation>
    <scope>NUCLEOTIDE SEQUENCE [LARGE SCALE GENOMIC DNA]</scope>
    <source>
        <strain>Tucson 15010-1051.87</strain>
    </source>
</reference>
<name>LST2_DROVI</name>
<feature type="chain" id="PRO_0000378969" description="Lateral signaling target protein 2 homolog">
    <location>
        <begin position="1"/>
        <end position="1052"/>
    </location>
</feature>
<feature type="zinc finger region" description="FYVE-type" evidence="2">
    <location>
        <begin position="972"/>
        <end position="1032"/>
    </location>
</feature>
<feature type="region of interest" description="Disordered" evidence="3">
    <location>
        <begin position="311"/>
        <end position="348"/>
    </location>
</feature>
<feature type="region of interest" description="Disordered" evidence="3">
    <location>
        <begin position="379"/>
        <end position="455"/>
    </location>
</feature>
<feature type="region of interest" description="Disordered" evidence="3">
    <location>
        <begin position="506"/>
        <end position="539"/>
    </location>
</feature>
<feature type="region of interest" description="Disordered" evidence="3">
    <location>
        <begin position="551"/>
        <end position="678"/>
    </location>
</feature>
<feature type="region of interest" description="Disordered" evidence="3">
    <location>
        <begin position="814"/>
        <end position="973"/>
    </location>
</feature>
<feature type="compositionally biased region" description="Low complexity" evidence="3">
    <location>
        <begin position="312"/>
        <end position="346"/>
    </location>
</feature>
<feature type="compositionally biased region" description="Low complexity" evidence="3">
    <location>
        <begin position="379"/>
        <end position="392"/>
    </location>
</feature>
<feature type="compositionally biased region" description="Low complexity" evidence="3">
    <location>
        <begin position="400"/>
        <end position="419"/>
    </location>
</feature>
<feature type="compositionally biased region" description="Acidic residues" evidence="3">
    <location>
        <begin position="422"/>
        <end position="455"/>
    </location>
</feature>
<feature type="compositionally biased region" description="Polar residues" evidence="3">
    <location>
        <begin position="554"/>
        <end position="574"/>
    </location>
</feature>
<feature type="compositionally biased region" description="Basic residues" evidence="3">
    <location>
        <begin position="588"/>
        <end position="614"/>
    </location>
</feature>
<feature type="compositionally biased region" description="Basic residues" evidence="3">
    <location>
        <begin position="625"/>
        <end position="644"/>
    </location>
</feature>
<feature type="compositionally biased region" description="Polar residues" evidence="3">
    <location>
        <begin position="652"/>
        <end position="661"/>
    </location>
</feature>
<feature type="compositionally biased region" description="Low complexity" evidence="3">
    <location>
        <begin position="824"/>
        <end position="842"/>
    </location>
</feature>
<feature type="compositionally biased region" description="Low complexity" evidence="3">
    <location>
        <begin position="872"/>
        <end position="915"/>
    </location>
</feature>
<feature type="compositionally biased region" description="Polar residues" evidence="3">
    <location>
        <begin position="926"/>
        <end position="935"/>
    </location>
</feature>
<feature type="compositionally biased region" description="Low complexity" evidence="3">
    <location>
        <begin position="936"/>
        <end position="963"/>
    </location>
</feature>
<feature type="binding site" evidence="2">
    <location>
        <position position="978"/>
    </location>
    <ligand>
        <name>Zn(2+)</name>
        <dbReference type="ChEBI" id="CHEBI:29105"/>
        <label>1</label>
    </ligand>
</feature>
<feature type="binding site" evidence="2">
    <location>
        <position position="981"/>
    </location>
    <ligand>
        <name>Zn(2+)</name>
        <dbReference type="ChEBI" id="CHEBI:29105"/>
        <label>1</label>
    </ligand>
</feature>
<feature type="binding site" evidence="2">
    <location>
        <position position="994"/>
    </location>
    <ligand>
        <name>Zn(2+)</name>
        <dbReference type="ChEBI" id="CHEBI:29105"/>
        <label>2</label>
    </ligand>
</feature>
<feature type="binding site" evidence="2">
    <location>
        <position position="997"/>
    </location>
    <ligand>
        <name>Zn(2+)</name>
        <dbReference type="ChEBI" id="CHEBI:29105"/>
        <label>2</label>
    </ligand>
</feature>
<feature type="binding site" evidence="2">
    <location>
        <position position="1002"/>
    </location>
    <ligand>
        <name>Zn(2+)</name>
        <dbReference type="ChEBI" id="CHEBI:29105"/>
        <label>1</label>
    </ligand>
</feature>
<feature type="binding site" evidence="2">
    <location>
        <position position="1005"/>
    </location>
    <ligand>
        <name>Zn(2+)</name>
        <dbReference type="ChEBI" id="CHEBI:29105"/>
        <label>1</label>
    </ligand>
</feature>
<feature type="binding site" evidence="2">
    <location>
        <position position="1024"/>
    </location>
    <ligand>
        <name>Zn(2+)</name>
        <dbReference type="ChEBI" id="CHEBI:29105"/>
        <label>2</label>
    </ligand>
</feature>
<feature type="binding site" evidence="2">
    <location>
        <position position="1027"/>
    </location>
    <ligand>
        <name>Zn(2+)</name>
        <dbReference type="ChEBI" id="CHEBI:29105"/>
        <label>2</label>
    </ligand>
</feature>
<feature type="modified residue" description="Phosphoserine" evidence="1">
    <location>
        <position position="555"/>
    </location>
</feature>
<feature type="modified residue" description="Phosphoserine" evidence="1">
    <location>
        <position position="556"/>
    </location>
</feature>
<feature type="modified residue" description="Phosphoserine" evidence="1">
    <location>
        <position position="854"/>
    </location>
</feature>
<organism>
    <name type="scientific">Drosophila virilis</name>
    <name type="common">Fruit fly</name>
    <dbReference type="NCBI Taxonomy" id="7244"/>
    <lineage>
        <taxon>Eukaryota</taxon>
        <taxon>Metazoa</taxon>
        <taxon>Ecdysozoa</taxon>
        <taxon>Arthropoda</taxon>
        <taxon>Hexapoda</taxon>
        <taxon>Insecta</taxon>
        <taxon>Pterygota</taxon>
        <taxon>Neoptera</taxon>
        <taxon>Endopterygota</taxon>
        <taxon>Diptera</taxon>
        <taxon>Brachycera</taxon>
        <taxon>Muscomorpha</taxon>
        <taxon>Ephydroidea</taxon>
        <taxon>Drosophilidae</taxon>
        <taxon>Drosophila</taxon>
    </lineage>
</organism>
<accession>B4M140</accession>
<protein>
    <recommendedName>
        <fullName>Lateral signaling target protein 2 homolog</fullName>
    </recommendedName>
</protein>
<comment type="function">
    <text evidence="1">Negative regulator of epidermal growth factor receptor (EGFR) signaling.</text>
</comment>
<comment type="similarity">
    <text evidence="4">Belongs to the lst-2 family.</text>
</comment>